<name>PLSX_THET2</name>
<organism>
    <name type="scientific">Thermus thermophilus (strain ATCC BAA-163 / DSM 7039 / HB27)</name>
    <dbReference type="NCBI Taxonomy" id="262724"/>
    <lineage>
        <taxon>Bacteria</taxon>
        <taxon>Thermotogati</taxon>
        <taxon>Deinococcota</taxon>
        <taxon>Deinococci</taxon>
        <taxon>Thermales</taxon>
        <taxon>Thermaceae</taxon>
        <taxon>Thermus</taxon>
    </lineage>
</organism>
<gene>
    <name evidence="1" type="primary">plsX</name>
    <name type="ordered locus">TT_C1384</name>
</gene>
<accession>Q72HV0</accession>
<evidence type="ECO:0000255" key="1">
    <source>
        <dbReference type="HAMAP-Rule" id="MF_00019"/>
    </source>
</evidence>
<protein>
    <recommendedName>
        <fullName evidence="1">Phosphate acyltransferase</fullName>
        <ecNumber evidence="1">2.3.1.274</ecNumber>
    </recommendedName>
    <alternativeName>
        <fullName evidence="1">Acyl-ACP phosphotransacylase</fullName>
    </alternativeName>
    <alternativeName>
        <fullName evidence="1">Acyl-[acyl-carrier-protein]--phosphate acyltransferase</fullName>
    </alternativeName>
    <alternativeName>
        <fullName evidence="1">Phosphate-acyl-ACP acyltransferase</fullName>
    </alternativeName>
</protein>
<proteinExistence type="inferred from homology"/>
<reference key="1">
    <citation type="journal article" date="2004" name="Nat. Biotechnol.">
        <title>The genome sequence of the extreme thermophile Thermus thermophilus.</title>
        <authorList>
            <person name="Henne A."/>
            <person name="Brueggemann H."/>
            <person name="Raasch C."/>
            <person name="Wiezer A."/>
            <person name="Hartsch T."/>
            <person name="Liesegang H."/>
            <person name="Johann A."/>
            <person name="Lienard T."/>
            <person name="Gohl O."/>
            <person name="Martinez-Arias R."/>
            <person name="Jacobi C."/>
            <person name="Starkuviene V."/>
            <person name="Schlenczeck S."/>
            <person name="Dencker S."/>
            <person name="Huber R."/>
            <person name="Klenk H.-P."/>
            <person name="Kramer W."/>
            <person name="Merkl R."/>
            <person name="Gottschalk G."/>
            <person name="Fritz H.-J."/>
        </authorList>
    </citation>
    <scope>NUCLEOTIDE SEQUENCE [LARGE SCALE GENOMIC DNA]</scope>
    <source>
        <strain>ATCC BAA-163 / DSM 7039 / HB27</strain>
    </source>
</reference>
<keyword id="KW-0963">Cytoplasm</keyword>
<keyword id="KW-0444">Lipid biosynthesis</keyword>
<keyword id="KW-0443">Lipid metabolism</keyword>
<keyword id="KW-0594">Phospholipid biosynthesis</keyword>
<keyword id="KW-1208">Phospholipid metabolism</keyword>
<keyword id="KW-0808">Transferase</keyword>
<dbReference type="EC" id="2.3.1.274" evidence="1"/>
<dbReference type="EMBL" id="AE017221">
    <property type="protein sequence ID" value="AAS81726.1"/>
    <property type="molecule type" value="Genomic_DNA"/>
</dbReference>
<dbReference type="RefSeq" id="WP_011173767.1">
    <property type="nucleotide sequence ID" value="NC_005835.1"/>
</dbReference>
<dbReference type="SMR" id="Q72HV0"/>
<dbReference type="GeneID" id="3170104"/>
<dbReference type="KEGG" id="tth:TT_C1384"/>
<dbReference type="eggNOG" id="COG0416">
    <property type="taxonomic scope" value="Bacteria"/>
</dbReference>
<dbReference type="HOGENOM" id="CLU_039379_1_1_0"/>
<dbReference type="OrthoDB" id="9806408at2"/>
<dbReference type="UniPathway" id="UPA00085"/>
<dbReference type="Proteomes" id="UP000000592">
    <property type="component" value="Chromosome"/>
</dbReference>
<dbReference type="GO" id="GO:0005737">
    <property type="term" value="C:cytoplasm"/>
    <property type="evidence" value="ECO:0007669"/>
    <property type="project" value="UniProtKB-SubCell"/>
</dbReference>
<dbReference type="GO" id="GO:0043811">
    <property type="term" value="F:phosphate:acyl-[acyl carrier protein] acyltransferase activity"/>
    <property type="evidence" value="ECO:0007669"/>
    <property type="project" value="UniProtKB-UniRule"/>
</dbReference>
<dbReference type="GO" id="GO:0006633">
    <property type="term" value="P:fatty acid biosynthetic process"/>
    <property type="evidence" value="ECO:0007669"/>
    <property type="project" value="UniProtKB-UniRule"/>
</dbReference>
<dbReference type="GO" id="GO:0008654">
    <property type="term" value="P:phospholipid biosynthetic process"/>
    <property type="evidence" value="ECO:0007669"/>
    <property type="project" value="UniProtKB-KW"/>
</dbReference>
<dbReference type="Gene3D" id="3.40.718.10">
    <property type="entry name" value="Isopropylmalate Dehydrogenase"/>
    <property type="match status" value="1"/>
</dbReference>
<dbReference type="HAMAP" id="MF_00019">
    <property type="entry name" value="PlsX"/>
    <property type="match status" value="1"/>
</dbReference>
<dbReference type="InterPro" id="IPR003664">
    <property type="entry name" value="FA_synthesis"/>
</dbReference>
<dbReference type="InterPro" id="IPR012281">
    <property type="entry name" value="Phospholipid_synth_PlsX-like"/>
</dbReference>
<dbReference type="NCBIfam" id="TIGR00182">
    <property type="entry name" value="plsX"/>
    <property type="match status" value="1"/>
</dbReference>
<dbReference type="PANTHER" id="PTHR30100">
    <property type="entry name" value="FATTY ACID/PHOSPHOLIPID SYNTHESIS PROTEIN PLSX"/>
    <property type="match status" value="1"/>
</dbReference>
<dbReference type="PANTHER" id="PTHR30100:SF1">
    <property type="entry name" value="PHOSPHATE ACYLTRANSFERASE"/>
    <property type="match status" value="1"/>
</dbReference>
<dbReference type="Pfam" id="PF02504">
    <property type="entry name" value="FA_synthesis"/>
    <property type="match status" value="1"/>
</dbReference>
<dbReference type="PIRSF" id="PIRSF002465">
    <property type="entry name" value="Phsphlp_syn_PlsX"/>
    <property type="match status" value="1"/>
</dbReference>
<dbReference type="SUPFAM" id="SSF53659">
    <property type="entry name" value="Isocitrate/Isopropylmalate dehydrogenase-like"/>
    <property type="match status" value="1"/>
</dbReference>
<feature type="chain" id="PRO_0000189958" description="Phosphate acyltransferase">
    <location>
        <begin position="1"/>
        <end position="326"/>
    </location>
</feature>
<comment type="function">
    <text evidence="1">Catalyzes the reversible formation of acyl-phosphate (acyl-PO(4)) from acyl-[acyl-carrier-protein] (acyl-ACP). This enzyme utilizes acyl-ACP as fatty acyl donor, but not acyl-CoA.</text>
</comment>
<comment type="catalytic activity">
    <reaction evidence="1">
        <text>a fatty acyl-[ACP] + phosphate = an acyl phosphate + holo-[ACP]</text>
        <dbReference type="Rhea" id="RHEA:42292"/>
        <dbReference type="Rhea" id="RHEA-COMP:9685"/>
        <dbReference type="Rhea" id="RHEA-COMP:14125"/>
        <dbReference type="ChEBI" id="CHEBI:43474"/>
        <dbReference type="ChEBI" id="CHEBI:59918"/>
        <dbReference type="ChEBI" id="CHEBI:64479"/>
        <dbReference type="ChEBI" id="CHEBI:138651"/>
        <dbReference type="EC" id="2.3.1.274"/>
    </reaction>
</comment>
<comment type="pathway">
    <text evidence="1">Lipid metabolism; phospholipid metabolism.</text>
</comment>
<comment type="subunit">
    <text evidence="1">Homodimer. Probably interacts with PlsY.</text>
</comment>
<comment type="subcellular location">
    <subcellularLocation>
        <location evidence="1">Cytoplasm</location>
    </subcellularLocation>
    <text evidence="1">Associated with the membrane possibly through PlsY.</text>
</comment>
<comment type="similarity">
    <text evidence="1">Belongs to the PlsX family.</text>
</comment>
<sequence length="326" mass="34345">MRIALDAMGGDRAPQVVVAGAAAAAREGVEVLLVGDEAQVRAELARLGADLPVWHAPDHIRMEEAATEVRRRPQASVRVAMELLKRGEVQAVVSMGHSGATLAAALLVLGRVKGVERPALLVEFPSLRGRTFLLDGGANADCRPSFLVQFAAMGLAYAEASGALAPRVGLLSIGEEEGKGNALVQEAYPLLRAALGERFYGNVEGRDIFLGTTEVVVTDGFTGNVALKLAEGEARVLLTWIKEALTSSFRARLGALLVREALARVKARVDPAQYGAMPLLGVEGAVFIGHGSADALAVKNALLRAKAMVEAGLLARVRQRLSALHV</sequence>